<feature type="chain" id="PRO_0000175130" description="Ferrochelatase">
    <location>
        <begin position="1"/>
        <end position="314"/>
    </location>
</feature>
<feature type="binding site" evidence="1">
    <location>
        <position position="184"/>
    </location>
    <ligand>
        <name>Fe cation</name>
        <dbReference type="ChEBI" id="CHEBI:24875"/>
    </ligand>
</feature>
<feature type="binding site" evidence="1">
    <location>
        <position position="259"/>
    </location>
    <ligand>
        <name>Fe cation</name>
        <dbReference type="ChEBI" id="CHEBI:24875"/>
    </ligand>
</feature>
<organism>
    <name type="scientific">Chlamydia trachomatis serovar D (strain ATCC VR-885 / DSM 19411 / UW-3/Cx)</name>
    <dbReference type="NCBI Taxonomy" id="272561"/>
    <lineage>
        <taxon>Bacteria</taxon>
        <taxon>Pseudomonadati</taxon>
        <taxon>Chlamydiota</taxon>
        <taxon>Chlamydiia</taxon>
        <taxon>Chlamydiales</taxon>
        <taxon>Chlamydiaceae</taxon>
        <taxon>Chlamydia/Chlamydophila group</taxon>
        <taxon>Chlamydia</taxon>
    </lineage>
</organism>
<protein>
    <recommendedName>
        <fullName evidence="1">Ferrochelatase</fullName>
        <ecNumber evidence="1">4.98.1.1</ecNumber>
    </recommendedName>
    <alternativeName>
        <fullName evidence="1">Heme synthase</fullName>
    </alternativeName>
    <alternativeName>
        <fullName evidence="1">Protoheme ferro-lyase</fullName>
    </alternativeName>
</protein>
<accession>O84492</accession>
<gene>
    <name evidence="1" type="primary">hemH</name>
    <name type="ordered locus">CT_485</name>
</gene>
<sequence length="314" mass="35542">MVTYLLANFGGPRTSQEIVSFLQALLTDRDVTGGMIPSMLHRPLFSYIAKRRAPHVARQYAYLGGGSPIFQDTERLAQNLSQELQASVIPFHRYLPETHRETLQALQESQGSIVGIPLFPHYTFAVTGSIIRFFLQHLPEKPISWITQFGVHPEFVSCMQQHIRDCLAAQQIAVEDCYFLFSVHGLPQRHIRLGDPYAQQCQASFEALRGELEGKIAFQSKFGIGKWLDPSTQEVCQSLRTKKRYIVIVPFGFVSDHIETLHEIDHLYVPILLQKGYRVVRIPAINASSRWVSSLAAIVRSSPQETSLEPLLMP</sequence>
<proteinExistence type="inferred from homology"/>
<reference key="1">
    <citation type="journal article" date="1998" name="Science">
        <title>Genome sequence of an obligate intracellular pathogen of humans: Chlamydia trachomatis.</title>
        <authorList>
            <person name="Stephens R.S."/>
            <person name="Kalman S."/>
            <person name="Lammel C.J."/>
            <person name="Fan J."/>
            <person name="Marathe R."/>
            <person name="Aravind L."/>
            <person name="Mitchell W.P."/>
            <person name="Olinger L."/>
            <person name="Tatusov R.L."/>
            <person name="Zhao Q."/>
            <person name="Koonin E.V."/>
            <person name="Davis R.W."/>
        </authorList>
    </citation>
    <scope>NUCLEOTIDE SEQUENCE [LARGE SCALE GENOMIC DNA]</scope>
    <source>
        <strain>ATCC VR-885 / DSM 19411 / UW-3/Cx</strain>
    </source>
</reference>
<name>HEMH_CHLTR</name>
<evidence type="ECO:0000255" key="1">
    <source>
        <dbReference type="HAMAP-Rule" id="MF_00323"/>
    </source>
</evidence>
<evidence type="ECO:0000305" key="2"/>
<dbReference type="EC" id="4.98.1.1" evidence="1"/>
<dbReference type="EMBL" id="AE001273">
    <property type="protein sequence ID" value="AAC68085.1"/>
    <property type="molecule type" value="Genomic_DNA"/>
</dbReference>
<dbReference type="PIR" id="C71508">
    <property type="entry name" value="C71508"/>
</dbReference>
<dbReference type="RefSeq" id="WP_009873147.1">
    <property type="nucleotide sequence ID" value="NC_000117.1"/>
</dbReference>
<dbReference type="SMR" id="O84492"/>
<dbReference type="FunCoup" id="O84492">
    <property type="interactions" value="220"/>
</dbReference>
<dbReference type="STRING" id="272561.CT_485"/>
<dbReference type="EnsemblBacteria" id="AAC68085">
    <property type="protein sequence ID" value="AAC68085"/>
    <property type="gene ID" value="CT_485"/>
</dbReference>
<dbReference type="KEGG" id="ctr:CT_485"/>
<dbReference type="PATRIC" id="fig|272561.5.peg.528"/>
<dbReference type="HOGENOM" id="CLU_018884_1_0_0"/>
<dbReference type="InParanoid" id="O84492"/>
<dbReference type="OrthoDB" id="9809741at2"/>
<dbReference type="UniPathway" id="UPA00252">
    <property type="reaction ID" value="UER00325"/>
</dbReference>
<dbReference type="Proteomes" id="UP000000431">
    <property type="component" value="Chromosome"/>
</dbReference>
<dbReference type="GO" id="GO:0005737">
    <property type="term" value="C:cytoplasm"/>
    <property type="evidence" value="ECO:0007669"/>
    <property type="project" value="UniProtKB-SubCell"/>
</dbReference>
<dbReference type="GO" id="GO:0004325">
    <property type="term" value="F:ferrochelatase activity"/>
    <property type="evidence" value="ECO:0000318"/>
    <property type="project" value="GO_Central"/>
</dbReference>
<dbReference type="GO" id="GO:0046872">
    <property type="term" value="F:metal ion binding"/>
    <property type="evidence" value="ECO:0007669"/>
    <property type="project" value="UniProtKB-KW"/>
</dbReference>
<dbReference type="GO" id="GO:0006783">
    <property type="term" value="P:heme biosynthetic process"/>
    <property type="evidence" value="ECO:0000318"/>
    <property type="project" value="GO_Central"/>
</dbReference>
<dbReference type="CDD" id="cd00419">
    <property type="entry name" value="Ferrochelatase_C"/>
    <property type="match status" value="1"/>
</dbReference>
<dbReference type="CDD" id="cd03411">
    <property type="entry name" value="Ferrochelatase_N"/>
    <property type="match status" value="1"/>
</dbReference>
<dbReference type="Gene3D" id="3.40.50.1400">
    <property type="match status" value="2"/>
</dbReference>
<dbReference type="HAMAP" id="MF_00323">
    <property type="entry name" value="Ferrochelatase"/>
    <property type="match status" value="1"/>
</dbReference>
<dbReference type="InterPro" id="IPR001015">
    <property type="entry name" value="Ferrochelatase"/>
</dbReference>
<dbReference type="InterPro" id="IPR019772">
    <property type="entry name" value="Ferrochelatase_AS"/>
</dbReference>
<dbReference type="InterPro" id="IPR033644">
    <property type="entry name" value="Ferrochelatase_C"/>
</dbReference>
<dbReference type="InterPro" id="IPR033659">
    <property type="entry name" value="Ferrochelatase_N"/>
</dbReference>
<dbReference type="NCBIfam" id="TIGR00109">
    <property type="entry name" value="hemH"/>
    <property type="match status" value="1"/>
</dbReference>
<dbReference type="PANTHER" id="PTHR11108">
    <property type="entry name" value="FERROCHELATASE"/>
    <property type="match status" value="1"/>
</dbReference>
<dbReference type="PANTHER" id="PTHR11108:SF1">
    <property type="entry name" value="FERROCHELATASE, MITOCHONDRIAL"/>
    <property type="match status" value="1"/>
</dbReference>
<dbReference type="Pfam" id="PF00762">
    <property type="entry name" value="Ferrochelatase"/>
    <property type="match status" value="1"/>
</dbReference>
<dbReference type="SUPFAM" id="SSF53800">
    <property type="entry name" value="Chelatase"/>
    <property type="match status" value="1"/>
</dbReference>
<dbReference type="PROSITE" id="PS00534">
    <property type="entry name" value="FERROCHELATASE"/>
    <property type="match status" value="1"/>
</dbReference>
<keyword id="KW-0963">Cytoplasm</keyword>
<keyword id="KW-0350">Heme biosynthesis</keyword>
<keyword id="KW-0408">Iron</keyword>
<keyword id="KW-0456">Lyase</keyword>
<keyword id="KW-0479">Metal-binding</keyword>
<keyword id="KW-0627">Porphyrin biosynthesis</keyword>
<keyword id="KW-1185">Reference proteome</keyword>
<comment type="function">
    <text evidence="1">Catalyzes the ferrous insertion into protoporphyrin IX.</text>
</comment>
<comment type="catalytic activity">
    <reaction evidence="1">
        <text>heme b + 2 H(+) = protoporphyrin IX + Fe(2+)</text>
        <dbReference type="Rhea" id="RHEA:22584"/>
        <dbReference type="ChEBI" id="CHEBI:15378"/>
        <dbReference type="ChEBI" id="CHEBI:29033"/>
        <dbReference type="ChEBI" id="CHEBI:57306"/>
        <dbReference type="ChEBI" id="CHEBI:60344"/>
        <dbReference type="EC" id="4.98.1.1"/>
    </reaction>
</comment>
<comment type="pathway">
    <text evidence="1">Porphyrin-containing compound metabolism; protoheme biosynthesis; protoheme from protoporphyrin-IX: step 1/1.</text>
</comment>
<comment type="subcellular location">
    <subcellularLocation>
        <location evidence="1">Cytoplasm</location>
    </subcellularLocation>
</comment>
<comment type="similarity">
    <text evidence="1 2">Belongs to the ferrochelatase family.</text>
</comment>